<accession>Q146W2</accession>
<reference key="1">
    <citation type="journal article" date="2006" name="Proc. Natl. Acad. Sci. U.S.A.">
        <title>Burkholderia xenovorans LB400 harbors a multi-replicon, 9.73-Mbp genome shaped for versatility.</title>
        <authorList>
            <person name="Chain P.S.G."/>
            <person name="Denef V.J."/>
            <person name="Konstantinidis K.T."/>
            <person name="Vergez L.M."/>
            <person name="Agullo L."/>
            <person name="Reyes V.L."/>
            <person name="Hauser L."/>
            <person name="Cordova M."/>
            <person name="Gomez L."/>
            <person name="Gonzalez M."/>
            <person name="Land M."/>
            <person name="Lao V."/>
            <person name="Larimer F."/>
            <person name="LiPuma J.J."/>
            <person name="Mahenthiralingam E."/>
            <person name="Malfatti S.A."/>
            <person name="Marx C.J."/>
            <person name="Parnell J.J."/>
            <person name="Ramette A."/>
            <person name="Richardson P."/>
            <person name="Seeger M."/>
            <person name="Smith D."/>
            <person name="Spilker T."/>
            <person name="Sul W.J."/>
            <person name="Tsoi T.V."/>
            <person name="Ulrich L.E."/>
            <person name="Zhulin I.B."/>
            <person name="Tiedje J.M."/>
        </authorList>
    </citation>
    <scope>NUCLEOTIDE SEQUENCE [LARGE SCALE GENOMIC DNA]</scope>
    <source>
        <strain>LB400</strain>
    </source>
</reference>
<keyword id="KW-0028">Amino-acid biosynthesis</keyword>
<keyword id="KW-0963">Cytoplasm</keyword>
<keyword id="KW-0413">Isomerase</keyword>
<keyword id="KW-0457">Lysine biosynthesis</keyword>
<keyword id="KW-1185">Reference proteome</keyword>
<protein>
    <recommendedName>
        <fullName evidence="1">Diaminopimelate epimerase</fullName>
        <shortName evidence="1">DAP epimerase</shortName>
        <ecNumber evidence="1">5.1.1.7</ecNumber>
    </recommendedName>
    <alternativeName>
        <fullName evidence="1">PLP-independent amino acid racemase</fullName>
    </alternativeName>
</protein>
<sequence length="287" mass="31177">MKLKFTKMHGAGNDFVVLDGYTQPVNLTPAQVRALADRHFGVGADQLLLVEKPTVAGVDFRYRIFNCDGGEVEHCGNGARCFVKFVRERGLTDQRSVRVQVQKGTITLTMQENGEVLVDMGTPVFDPERVPFATKGLEGRREGADTLWPLDVSGTTRWISVVSMGNPHAVQVVGDVEAFPVLAEGPVIERHARFPQRVNAGFMQIVGRNEIRLRVYERGAGETLACGTGACAAVAAGIRRGLLDSPVRVHTHGGDLTISWDSTREGEPLLMAGPAVTVFEGEIELPD</sequence>
<dbReference type="EC" id="5.1.1.7" evidence="1"/>
<dbReference type="EMBL" id="CP000270">
    <property type="protein sequence ID" value="ABE28627.1"/>
    <property type="molecule type" value="Genomic_DNA"/>
</dbReference>
<dbReference type="RefSeq" id="WP_011486479.1">
    <property type="nucleotide sequence ID" value="NC_007951.1"/>
</dbReference>
<dbReference type="SMR" id="Q146W2"/>
<dbReference type="STRING" id="266265.Bxe_A4373"/>
<dbReference type="KEGG" id="bxb:DR64_2050"/>
<dbReference type="KEGG" id="bxe:Bxe_A4373"/>
<dbReference type="PATRIC" id="fig|266265.5.peg.92"/>
<dbReference type="eggNOG" id="COG0253">
    <property type="taxonomic scope" value="Bacteria"/>
</dbReference>
<dbReference type="OrthoDB" id="9805408at2"/>
<dbReference type="UniPathway" id="UPA00034">
    <property type="reaction ID" value="UER00025"/>
</dbReference>
<dbReference type="Proteomes" id="UP000001817">
    <property type="component" value="Chromosome 1"/>
</dbReference>
<dbReference type="GO" id="GO:0005829">
    <property type="term" value="C:cytosol"/>
    <property type="evidence" value="ECO:0007669"/>
    <property type="project" value="TreeGrafter"/>
</dbReference>
<dbReference type="GO" id="GO:0008837">
    <property type="term" value="F:diaminopimelate epimerase activity"/>
    <property type="evidence" value="ECO:0007669"/>
    <property type="project" value="UniProtKB-UniRule"/>
</dbReference>
<dbReference type="GO" id="GO:0009089">
    <property type="term" value="P:lysine biosynthetic process via diaminopimelate"/>
    <property type="evidence" value="ECO:0007669"/>
    <property type="project" value="UniProtKB-UniRule"/>
</dbReference>
<dbReference type="FunFam" id="3.10.310.10:FF:000001">
    <property type="entry name" value="Diaminopimelate epimerase"/>
    <property type="match status" value="1"/>
</dbReference>
<dbReference type="Gene3D" id="3.10.310.10">
    <property type="entry name" value="Diaminopimelate Epimerase, Chain A, domain 1"/>
    <property type="match status" value="2"/>
</dbReference>
<dbReference type="HAMAP" id="MF_00197">
    <property type="entry name" value="DAP_epimerase"/>
    <property type="match status" value="1"/>
</dbReference>
<dbReference type="InterPro" id="IPR018510">
    <property type="entry name" value="DAP_epimerase_AS"/>
</dbReference>
<dbReference type="InterPro" id="IPR001653">
    <property type="entry name" value="DAP_epimerase_DapF"/>
</dbReference>
<dbReference type="NCBIfam" id="TIGR00652">
    <property type="entry name" value="DapF"/>
    <property type="match status" value="1"/>
</dbReference>
<dbReference type="PANTHER" id="PTHR31689:SF0">
    <property type="entry name" value="DIAMINOPIMELATE EPIMERASE"/>
    <property type="match status" value="1"/>
</dbReference>
<dbReference type="PANTHER" id="PTHR31689">
    <property type="entry name" value="DIAMINOPIMELATE EPIMERASE, CHLOROPLASTIC"/>
    <property type="match status" value="1"/>
</dbReference>
<dbReference type="Pfam" id="PF01678">
    <property type="entry name" value="DAP_epimerase"/>
    <property type="match status" value="2"/>
</dbReference>
<dbReference type="SUPFAM" id="SSF54506">
    <property type="entry name" value="Diaminopimelate epimerase-like"/>
    <property type="match status" value="1"/>
</dbReference>
<dbReference type="PROSITE" id="PS01326">
    <property type="entry name" value="DAP_EPIMERASE"/>
    <property type="match status" value="1"/>
</dbReference>
<comment type="function">
    <text evidence="1">Catalyzes the stereoinversion of LL-2,6-diaminopimelate (L,L-DAP) to meso-diaminopimelate (meso-DAP), a precursor of L-lysine and an essential component of the bacterial peptidoglycan.</text>
</comment>
<comment type="catalytic activity">
    <reaction evidence="1">
        <text>(2S,6S)-2,6-diaminopimelate = meso-2,6-diaminopimelate</text>
        <dbReference type="Rhea" id="RHEA:15393"/>
        <dbReference type="ChEBI" id="CHEBI:57609"/>
        <dbReference type="ChEBI" id="CHEBI:57791"/>
        <dbReference type="EC" id="5.1.1.7"/>
    </reaction>
</comment>
<comment type="pathway">
    <text evidence="1">Amino-acid biosynthesis; L-lysine biosynthesis via DAP pathway; DL-2,6-diaminopimelate from LL-2,6-diaminopimelate: step 1/1.</text>
</comment>
<comment type="subunit">
    <text evidence="1">Homodimer.</text>
</comment>
<comment type="subcellular location">
    <subcellularLocation>
        <location evidence="1">Cytoplasm</location>
    </subcellularLocation>
</comment>
<comment type="similarity">
    <text evidence="1">Belongs to the diaminopimelate epimerase family.</text>
</comment>
<evidence type="ECO:0000255" key="1">
    <source>
        <dbReference type="HAMAP-Rule" id="MF_00197"/>
    </source>
</evidence>
<organism>
    <name type="scientific">Paraburkholderia xenovorans (strain LB400)</name>
    <dbReference type="NCBI Taxonomy" id="266265"/>
    <lineage>
        <taxon>Bacteria</taxon>
        <taxon>Pseudomonadati</taxon>
        <taxon>Pseudomonadota</taxon>
        <taxon>Betaproteobacteria</taxon>
        <taxon>Burkholderiales</taxon>
        <taxon>Burkholderiaceae</taxon>
        <taxon>Paraburkholderia</taxon>
    </lineage>
</organism>
<name>DAPF_PARXL</name>
<feature type="chain" id="PRO_1000011863" description="Diaminopimelate epimerase">
    <location>
        <begin position="1"/>
        <end position="287"/>
    </location>
</feature>
<feature type="active site" description="Proton donor" evidence="1">
    <location>
        <position position="75"/>
    </location>
</feature>
<feature type="active site" description="Proton acceptor" evidence="1">
    <location>
        <position position="226"/>
    </location>
</feature>
<feature type="binding site" evidence="1">
    <location>
        <position position="13"/>
    </location>
    <ligand>
        <name>substrate</name>
    </ligand>
</feature>
<feature type="binding site" evidence="1">
    <location>
        <position position="46"/>
    </location>
    <ligand>
        <name>substrate</name>
    </ligand>
</feature>
<feature type="binding site" evidence="1">
    <location>
        <position position="66"/>
    </location>
    <ligand>
        <name>substrate</name>
    </ligand>
</feature>
<feature type="binding site" evidence="1">
    <location>
        <begin position="76"/>
        <end position="77"/>
    </location>
    <ligand>
        <name>substrate</name>
    </ligand>
</feature>
<feature type="binding site" evidence="1">
    <location>
        <position position="166"/>
    </location>
    <ligand>
        <name>substrate</name>
    </ligand>
</feature>
<feature type="binding site" evidence="1">
    <location>
        <position position="199"/>
    </location>
    <ligand>
        <name>substrate</name>
    </ligand>
</feature>
<feature type="binding site" evidence="1">
    <location>
        <begin position="217"/>
        <end position="218"/>
    </location>
    <ligand>
        <name>substrate</name>
    </ligand>
</feature>
<feature type="binding site" evidence="1">
    <location>
        <begin position="227"/>
        <end position="228"/>
    </location>
    <ligand>
        <name>substrate</name>
    </ligand>
</feature>
<feature type="site" description="Could be important to modulate the pK values of the two catalytic cysteine residues" evidence="1">
    <location>
        <position position="168"/>
    </location>
</feature>
<feature type="site" description="Could be important to modulate the pK values of the two catalytic cysteine residues" evidence="1">
    <location>
        <position position="217"/>
    </location>
</feature>
<gene>
    <name evidence="1" type="primary">dapF</name>
    <name type="ordered locus">Bxeno_A0089</name>
    <name type="ORF">Bxe_A4373</name>
</gene>
<proteinExistence type="inferred from homology"/>